<comment type="function">
    <text evidence="1">Part of the ABC transporter complex PstSACB involved in phosphate import. Responsible for energy coupling to the transport system.</text>
</comment>
<comment type="catalytic activity">
    <reaction evidence="1">
        <text>phosphate(out) + ATP + H2O = ADP + 2 phosphate(in) + H(+)</text>
        <dbReference type="Rhea" id="RHEA:24440"/>
        <dbReference type="ChEBI" id="CHEBI:15377"/>
        <dbReference type="ChEBI" id="CHEBI:15378"/>
        <dbReference type="ChEBI" id="CHEBI:30616"/>
        <dbReference type="ChEBI" id="CHEBI:43474"/>
        <dbReference type="ChEBI" id="CHEBI:456216"/>
        <dbReference type="EC" id="7.3.2.1"/>
    </reaction>
</comment>
<comment type="subunit">
    <text evidence="1">The complex is composed of two ATP-binding proteins (PstB), two transmembrane proteins (PstC and PstA) and a solute-binding protein (PstS).</text>
</comment>
<comment type="subcellular location">
    <subcellularLocation>
        <location evidence="1">Cell inner membrane</location>
        <topology evidence="1">Peripheral membrane protein</topology>
    </subcellularLocation>
</comment>
<comment type="similarity">
    <text evidence="1">Belongs to the ABC transporter superfamily. Phosphate importer (TC 3.A.1.7) family.</text>
</comment>
<sequence>MPIQRIAITASANAPLTTTPVKIATRNLEFYYGTFQALKQINLEIPEKRVTALIGPSGCGKSTLLRIFNRIYALYPKLEARGEVFLDGENILSPKYSINRLRSKVGMVFQKPVPFPMTIYENVAYGIRHHEVMCKSQMNDRVEQALQQSALWEEVKDKLNQNALGLSGGQQQRLCIARAVALTPSVLLLDEPTSALDPISTSRIEQLIEELKTKYTIVIVTHNMQQAARVSDYTGFMYLGDLIEHDRTETIFSRPSKQQTEDYITGRFG</sequence>
<feature type="chain" id="PRO_0000092936" description="Phosphate import ATP-binding protein PstB">
    <location>
        <begin position="1"/>
        <end position="269"/>
    </location>
</feature>
<feature type="domain" description="ABC transporter" evidence="1">
    <location>
        <begin position="23"/>
        <end position="264"/>
    </location>
</feature>
<feature type="binding site" evidence="1">
    <location>
        <begin position="55"/>
        <end position="62"/>
    </location>
    <ligand>
        <name>ATP</name>
        <dbReference type="ChEBI" id="CHEBI:30616"/>
    </ligand>
</feature>
<reference key="1">
    <citation type="journal article" date="2003" name="J. Bacteriol.">
        <title>Comparative analyses of the complete genome sequences of Pierce's disease and citrus variegated chlorosis strains of Xylella fastidiosa.</title>
        <authorList>
            <person name="Van Sluys M.A."/>
            <person name="de Oliveira M.C."/>
            <person name="Monteiro-Vitorello C.B."/>
            <person name="Miyaki C.Y."/>
            <person name="Furlan L.R."/>
            <person name="Camargo L.E.A."/>
            <person name="da Silva A.C.R."/>
            <person name="Moon D.H."/>
            <person name="Takita M.A."/>
            <person name="Lemos E.G.M."/>
            <person name="Machado M.A."/>
            <person name="Ferro M.I.T."/>
            <person name="da Silva F.R."/>
            <person name="Goldman M.H.S."/>
            <person name="Goldman G.H."/>
            <person name="Lemos M.V.F."/>
            <person name="El-Dorry H."/>
            <person name="Tsai S.M."/>
            <person name="Carrer H."/>
            <person name="Carraro D.M."/>
            <person name="de Oliveira R.C."/>
            <person name="Nunes L.R."/>
            <person name="Siqueira W.J."/>
            <person name="Coutinho L.L."/>
            <person name="Kimura E.T."/>
            <person name="Ferro E.S."/>
            <person name="Harakava R."/>
            <person name="Kuramae E.E."/>
            <person name="Marino C.L."/>
            <person name="Giglioti E."/>
            <person name="Abreu I.L."/>
            <person name="Alves L.M.C."/>
            <person name="do Amaral A.M."/>
            <person name="Baia G.S."/>
            <person name="Blanco S.R."/>
            <person name="Brito M.S."/>
            <person name="Cannavan F.S."/>
            <person name="Celestino A.V."/>
            <person name="da Cunha A.F."/>
            <person name="Fenille R.C."/>
            <person name="Ferro J.A."/>
            <person name="Formighieri E.F."/>
            <person name="Kishi L.T."/>
            <person name="Leoni S.G."/>
            <person name="Oliveira A.R."/>
            <person name="Rosa V.E. Jr."/>
            <person name="Sassaki F.T."/>
            <person name="Sena J.A.D."/>
            <person name="de Souza A.A."/>
            <person name="Truffi D."/>
            <person name="Tsukumo F."/>
            <person name="Yanai G.M."/>
            <person name="Zaros L.G."/>
            <person name="Civerolo E.L."/>
            <person name="Simpson A.J.G."/>
            <person name="Almeida N.F. Jr."/>
            <person name="Setubal J.C."/>
            <person name="Kitajima J.P."/>
        </authorList>
    </citation>
    <scope>NUCLEOTIDE SEQUENCE [LARGE SCALE GENOMIC DNA]</scope>
    <source>
        <strain>Temecula1 / ATCC 700964</strain>
    </source>
</reference>
<dbReference type="EC" id="7.3.2.1" evidence="1"/>
<dbReference type="EMBL" id="AE009442">
    <property type="protein sequence ID" value="AAO29056.1"/>
    <property type="molecule type" value="Genomic_DNA"/>
</dbReference>
<dbReference type="SMR" id="Q87C88"/>
<dbReference type="KEGG" id="xft:PD_1205"/>
<dbReference type="HOGENOM" id="CLU_000604_1_22_6"/>
<dbReference type="Proteomes" id="UP000002516">
    <property type="component" value="Chromosome"/>
</dbReference>
<dbReference type="GO" id="GO:0005886">
    <property type="term" value="C:plasma membrane"/>
    <property type="evidence" value="ECO:0007669"/>
    <property type="project" value="UniProtKB-SubCell"/>
</dbReference>
<dbReference type="GO" id="GO:0005524">
    <property type="term" value="F:ATP binding"/>
    <property type="evidence" value="ECO:0007669"/>
    <property type="project" value="UniProtKB-KW"/>
</dbReference>
<dbReference type="GO" id="GO:0016887">
    <property type="term" value="F:ATP hydrolysis activity"/>
    <property type="evidence" value="ECO:0007669"/>
    <property type="project" value="InterPro"/>
</dbReference>
<dbReference type="GO" id="GO:0015415">
    <property type="term" value="F:ATPase-coupled phosphate ion transmembrane transporter activity"/>
    <property type="evidence" value="ECO:0007669"/>
    <property type="project" value="UniProtKB-EC"/>
</dbReference>
<dbReference type="GO" id="GO:0035435">
    <property type="term" value="P:phosphate ion transmembrane transport"/>
    <property type="evidence" value="ECO:0007669"/>
    <property type="project" value="InterPro"/>
</dbReference>
<dbReference type="CDD" id="cd03260">
    <property type="entry name" value="ABC_PstB_phosphate_transporter"/>
    <property type="match status" value="1"/>
</dbReference>
<dbReference type="FunFam" id="3.40.50.300:FF:000132">
    <property type="entry name" value="Phosphate import ATP-binding protein PstB"/>
    <property type="match status" value="1"/>
</dbReference>
<dbReference type="Gene3D" id="3.40.50.300">
    <property type="entry name" value="P-loop containing nucleotide triphosphate hydrolases"/>
    <property type="match status" value="1"/>
</dbReference>
<dbReference type="InterPro" id="IPR003593">
    <property type="entry name" value="AAA+_ATPase"/>
</dbReference>
<dbReference type="InterPro" id="IPR003439">
    <property type="entry name" value="ABC_transporter-like_ATP-bd"/>
</dbReference>
<dbReference type="InterPro" id="IPR017871">
    <property type="entry name" value="ABC_transporter-like_CS"/>
</dbReference>
<dbReference type="InterPro" id="IPR027417">
    <property type="entry name" value="P-loop_NTPase"/>
</dbReference>
<dbReference type="InterPro" id="IPR005670">
    <property type="entry name" value="PstB-like"/>
</dbReference>
<dbReference type="NCBIfam" id="TIGR00972">
    <property type="entry name" value="3a0107s01c2"/>
    <property type="match status" value="1"/>
</dbReference>
<dbReference type="PANTHER" id="PTHR43423">
    <property type="entry name" value="ABC TRANSPORTER I FAMILY MEMBER 17"/>
    <property type="match status" value="1"/>
</dbReference>
<dbReference type="PANTHER" id="PTHR43423:SF3">
    <property type="entry name" value="PHOSPHATE IMPORT ATP-BINDING PROTEIN PSTB"/>
    <property type="match status" value="1"/>
</dbReference>
<dbReference type="Pfam" id="PF00005">
    <property type="entry name" value="ABC_tran"/>
    <property type="match status" value="1"/>
</dbReference>
<dbReference type="SMART" id="SM00382">
    <property type="entry name" value="AAA"/>
    <property type="match status" value="1"/>
</dbReference>
<dbReference type="SUPFAM" id="SSF52540">
    <property type="entry name" value="P-loop containing nucleoside triphosphate hydrolases"/>
    <property type="match status" value="1"/>
</dbReference>
<dbReference type="PROSITE" id="PS00211">
    <property type="entry name" value="ABC_TRANSPORTER_1"/>
    <property type="match status" value="1"/>
</dbReference>
<dbReference type="PROSITE" id="PS50893">
    <property type="entry name" value="ABC_TRANSPORTER_2"/>
    <property type="match status" value="1"/>
</dbReference>
<dbReference type="PROSITE" id="PS51238">
    <property type="entry name" value="PSTB"/>
    <property type="match status" value="1"/>
</dbReference>
<protein>
    <recommendedName>
        <fullName evidence="1">Phosphate import ATP-binding protein PstB</fullName>
        <ecNumber evidence="1">7.3.2.1</ecNumber>
    </recommendedName>
    <alternativeName>
        <fullName evidence="1">ABC phosphate transporter</fullName>
    </alternativeName>
    <alternativeName>
        <fullName evidence="1">Phosphate-transporting ATPase</fullName>
    </alternativeName>
</protein>
<name>PSTB_XYLFT</name>
<evidence type="ECO:0000255" key="1">
    <source>
        <dbReference type="HAMAP-Rule" id="MF_01702"/>
    </source>
</evidence>
<proteinExistence type="inferred from homology"/>
<gene>
    <name evidence="1" type="primary">pstB</name>
    <name type="ordered locus">PD_1205</name>
</gene>
<accession>Q87C88</accession>
<keyword id="KW-0067">ATP-binding</keyword>
<keyword id="KW-0997">Cell inner membrane</keyword>
<keyword id="KW-1003">Cell membrane</keyword>
<keyword id="KW-0472">Membrane</keyword>
<keyword id="KW-0547">Nucleotide-binding</keyword>
<keyword id="KW-0592">Phosphate transport</keyword>
<keyword id="KW-1185">Reference proteome</keyword>
<keyword id="KW-1278">Translocase</keyword>
<keyword id="KW-0813">Transport</keyword>
<organism>
    <name type="scientific">Xylella fastidiosa (strain Temecula1 / ATCC 700964)</name>
    <dbReference type="NCBI Taxonomy" id="183190"/>
    <lineage>
        <taxon>Bacteria</taxon>
        <taxon>Pseudomonadati</taxon>
        <taxon>Pseudomonadota</taxon>
        <taxon>Gammaproteobacteria</taxon>
        <taxon>Lysobacterales</taxon>
        <taxon>Lysobacteraceae</taxon>
        <taxon>Xylella</taxon>
    </lineage>
</organism>